<reference key="1">
    <citation type="journal article" date="2004" name="Genome Res.">
        <title>The status, quality, and expansion of the NIH full-length cDNA project: the Mammalian Gene Collection (MGC).</title>
        <authorList>
            <consortium name="The MGC Project Team"/>
        </authorList>
    </citation>
    <scope>NUCLEOTIDE SEQUENCE [LARGE SCALE MRNA]</scope>
    <source>
        <tissue>Placenta</tissue>
    </source>
</reference>
<reference key="2">
    <citation type="journal article" date="2004" name="J. Biol. Chem.">
        <title>EHD2 and the novel EH domain binding protein EHBP1 couple endocytosis to the actin cytoskeleton.</title>
        <authorList>
            <person name="Guilherme A."/>
            <person name="Soriano N.A."/>
            <person name="Bose S."/>
            <person name="Holik J."/>
            <person name="Bose A."/>
            <person name="Pomerleau D.P."/>
            <person name="Furcinitti P."/>
            <person name="Leszyk J."/>
            <person name="Corvera S."/>
            <person name="Czech M.P."/>
        </authorList>
    </citation>
    <scope>SUBCELLULAR LOCATION</scope>
    <scope>IDENTIFICATION BY MASS SPECTROMETRY</scope>
</reference>
<reference key="3">
    <citation type="journal article" date="2012" name="Nat. Commun.">
        <title>Quantitative maps of protein phosphorylation sites across 14 different rat organs and tissues.</title>
        <authorList>
            <person name="Lundby A."/>
            <person name="Secher A."/>
            <person name="Lage K."/>
            <person name="Nordsborg N.B."/>
            <person name="Dmytriyev A."/>
            <person name="Lundby C."/>
            <person name="Olsen J.V."/>
        </authorList>
    </citation>
    <scope>PHOSPHORYLATION [LARGE SCALE ANALYSIS] AT SER-3; SER-438; SER-470 AND SER-493</scope>
    <scope>IDENTIFICATION BY MASS SPECTROMETRY [LARGE SCALE ANALYSIS]</scope>
</reference>
<dbReference type="EMBL" id="BC097385">
    <property type="protein sequence ID" value="AAH97385.1"/>
    <property type="molecule type" value="mRNA"/>
</dbReference>
<dbReference type="RefSeq" id="NP_001020068.1">
    <property type="nucleotide sequence ID" value="NM_001024897.1"/>
</dbReference>
<dbReference type="RefSeq" id="XP_038937564.1">
    <property type="nucleotide sequence ID" value="XM_039081636.2"/>
</dbReference>
<dbReference type="SMR" id="Q4V8H8"/>
<dbReference type="BioGRID" id="262737">
    <property type="interactions" value="3"/>
</dbReference>
<dbReference type="FunCoup" id="Q4V8H8">
    <property type="interactions" value="1815"/>
</dbReference>
<dbReference type="STRING" id="10116.ENSRNOP00000017353"/>
<dbReference type="GlyGen" id="Q4V8H8">
    <property type="glycosylation" value="1 site, 1 O-linked glycan (1 site)"/>
</dbReference>
<dbReference type="iPTMnet" id="Q4V8H8"/>
<dbReference type="PhosphoSitePlus" id="Q4V8H8"/>
<dbReference type="SwissPalm" id="Q4V8H8"/>
<dbReference type="jPOST" id="Q4V8H8"/>
<dbReference type="PaxDb" id="10116-ENSRNOP00000017353"/>
<dbReference type="Ensembl" id="ENSRNOT00000017353.6">
    <property type="protein sequence ID" value="ENSRNOP00000017353.5"/>
    <property type="gene ID" value="ENSRNOG00000011346.6"/>
</dbReference>
<dbReference type="GeneID" id="361512"/>
<dbReference type="KEGG" id="rno:361512"/>
<dbReference type="UCSC" id="RGD:1560856">
    <property type="organism name" value="rat"/>
</dbReference>
<dbReference type="AGR" id="RGD:1560856"/>
<dbReference type="CTD" id="30846"/>
<dbReference type="RGD" id="1560856">
    <property type="gene designation" value="Ehd2"/>
</dbReference>
<dbReference type="eggNOG" id="KOG1954">
    <property type="taxonomic scope" value="Eukaryota"/>
</dbReference>
<dbReference type="GeneTree" id="ENSGT00940000159256"/>
<dbReference type="HOGENOM" id="CLU_017595_1_1_1"/>
<dbReference type="InParanoid" id="Q4V8H8"/>
<dbReference type="OMA" id="CAQIPNQ"/>
<dbReference type="OrthoDB" id="1716625at2759"/>
<dbReference type="PhylomeDB" id="Q4V8H8"/>
<dbReference type="TreeFam" id="TF314429"/>
<dbReference type="Reactome" id="R-RNO-983231">
    <property type="pathway name" value="Factors involved in megakaryocyte development and platelet production"/>
</dbReference>
<dbReference type="PRO" id="PR:Q4V8H8"/>
<dbReference type="Proteomes" id="UP000002494">
    <property type="component" value="Chromosome 1"/>
</dbReference>
<dbReference type="Bgee" id="ENSRNOG00000011346">
    <property type="expression patterns" value="Expressed in lung and 18 other cell types or tissues"/>
</dbReference>
<dbReference type="GO" id="GO:0005901">
    <property type="term" value="C:caveola"/>
    <property type="evidence" value="ECO:0000250"/>
    <property type="project" value="UniProtKB"/>
</dbReference>
<dbReference type="GO" id="GO:0005737">
    <property type="term" value="C:cytoplasm"/>
    <property type="evidence" value="ECO:0000318"/>
    <property type="project" value="GO_Central"/>
</dbReference>
<dbReference type="GO" id="GO:0005829">
    <property type="term" value="C:cytosol"/>
    <property type="evidence" value="ECO:0000250"/>
    <property type="project" value="UniProtKB"/>
</dbReference>
<dbReference type="GO" id="GO:0005769">
    <property type="term" value="C:early endosome"/>
    <property type="evidence" value="ECO:0000318"/>
    <property type="project" value="GO_Central"/>
</dbReference>
<dbReference type="GO" id="GO:0030139">
    <property type="term" value="C:endocytic vesicle"/>
    <property type="evidence" value="ECO:0000318"/>
    <property type="project" value="GO_Central"/>
</dbReference>
<dbReference type="GO" id="GO:0016020">
    <property type="term" value="C:membrane"/>
    <property type="evidence" value="ECO:0000250"/>
    <property type="project" value="UniProtKB"/>
</dbReference>
<dbReference type="GO" id="GO:0048471">
    <property type="term" value="C:perinuclear region of cytoplasm"/>
    <property type="evidence" value="ECO:0000266"/>
    <property type="project" value="RGD"/>
</dbReference>
<dbReference type="GO" id="GO:0005886">
    <property type="term" value="C:plasma membrane"/>
    <property type="evidence" value="ECO:0000250"/>
    <property type="project" value="UniProtKB"/>
</dbReference>
<dbReference type="GO" id="GO:0055038">
    <property type="term" value="C:recycling endosome membrane"/>
    <property type="evidence" value="ECO:0000250"/>
    <property type="project" value="UniProtKB"/>
</dbReference>
<dbReference type="GO" id="GO:0005524">
    <property type="term" value="F:ATP binding"/>
    <property type="evidence" value="ECO:0007669"/>
    <property type="project" value="UniProtKB-KW"/>
</dbReference>
<dbReference type="GO" id="GO:0005509">
    <property type="term" value="F:calcium ion binding"/>
    <property type="evidence" value="ECO:0007669"/>
    <property type="project" value="InterPro"/>
</dbReference>
<dbReference type="GO" id="GO:0005525">
    <property type="term" value="F:GTP binding"/>
    <property type="evidence" value="ECO:0007669"/>
    <property type="project" value="InterPro"/>
</dbReference>
<dbReference type="GO" id="GO:0016787">
    <property type="term" value="F:hydrolase activity"/>
    <property type="evidence" value="ECO:0007669"/>
    <property type="project" value="UniProtKB-KW"/>
</dbReference>
<dbReference type="GO" id="GO:0042802">
    <property type="term" value="F:identical protein binding"/>
    <property type="evidence" value="ECO:0000266"/>
    <property type="project" value="RGD"/>
</dbReference>
<dbReference type="GO" id="GO:0019904">
    <property type="term" value="F:protein domain specific binding"/>
    <property type="evidence" value="ECO:0000266"/>
    <property type="project" value="RGD"/>
</dbReference>
<dbReference type="GO" id="GO:0060271">
    <property type="term" value="P:cilium assembly"/>
    <property type="evidence" value="ECO:0000318"/>
    <property type="project" value="GO_Central"/>
</dbReference>
<dbReference type="GO" id="GO:0030866">
    <property type="term" value="P:cortical actin cytoskeleton organization"/>
    <property type="evidence" value="ECO:0000266"/>
    <property type="project" value="RGD"/>
</dbReference>
<dbReference type="GO" id="GO:0032456">
    <property type="term" value="P:endocytic recycling"/>
    <property type="evidence" value="ECO:0000250"/>
    <property type="project" value="UniProtKB"/>
</dbReference>
<dbReference type="GO" id="GO:0006897">
    <property type="term" value="P:endocytosis"/>
    <property type="evidence" value="ECO:0000266"/>
    <property type="project" value="RGD"/>
</dbReference>
<dbReference type="GO" id="GO:0097320">
    <property type="term" value="P:plasma membrane tubulation"/>
    <property type="evidence" value="ECO:0000250"/>
    <property type="project" value="UniProtKB"/>
</dbReference>
<dbReference type="GO" id="GO:2001137">
    <property type="term" value="P:positive regulation of endocytic recycling"/>
    <property type="evidence" value="ECO:0000250"/>
    <property type="project" value="UniProtKB"/>
</dbReference>
<dbReference type="GO" id="GO:1901741">
    <property type="term" value="P:positive regulation of myoblast fusion"/>
    <property type="evidence" value="ECO:0000250"/>
    <property type="project" value="UniProtKB"/>
</dbReference>
<dbReference type="GO" id="GO:0072659">
    <property type="term" value="P:protein localization to plasma membrane"/>
    <property type="evidence" value="ECO:0000250"/>
    <property type="project" value="UniProtKB"/>
</dbReference>
<dbReference type="CDD" id="cd00052">
    <property type="entry name" value="EH"/>
    <property type="match status" value="1"/>
</dbReference>
<dbReference type="CDD" id="cd09913">
    <property type="entry name" value="EHD"/>
    <property type="match status" value="1"/>
</dbReference>
<dbReference type="FunFam" id="3.40.50.300:FF:000147">
    <property type="entry name" value="EH domain-containing protein 1"/>
    <property type="match status" value="1"/>
</dbReference>
<dbReference type="FunFam" id="1.10.238.10:FF:000038">
    <property type="entry name" value="EH domain-containing protein 3"/>
    <property type="match status" value="1"/>
</dbReference>
<dbReference type="Gene3D" id="1.10.268.20">
    <property type="match status" value="1"/>
</dbReference>
<dbReference type="Gene3D" id="1.10.238.10">
    <property type="entry name" value="EF-hand"/>
    <property type="match status" value="1"/>
</dbReference>
<dbReference type="Gene3D" id="3.40.50.300">
    <property type="entry name" value="P-loop containing nucleotide triphosphate hydrolases"/>
    <property type="match status" value="1"/>
</dbReference>
<dbReference type="InterPro" id="IPR040990">
    <property type="entry name" value="DUF5600"/>
</dbReference>
<dbReference type="InterPro" id="IPR045063">
    <property type="entry name" value="Dynamin_N"/>
</dbReference>
<dbReference type="InterPro" id="IPR011992">
    <property type="entry name" value="EF-hand-dom_pair"/>
</dbReference>
<dbReference type="InterPro" id="IPR018247">
    <property type="entry name" value="EF_Hand_1_Ca_BS"/>
</dbReference>
<dbReference type="InterPro" id="IPR002048">
    <property type="entry name" value="EF_hand_dom"/>
</dbReference>
<dbReference type="InterPro" id="IPR000261">
    <property type="entry name" value="EH_dom"/>
</dbReference>
<dbReference type="InterPro" id="IPR031692">
    <property type="entry name" value="EHD_N"/>
</dbReference>
<dbReference type="InterPro" id="IPR030381">
    <property type="entry name" value="G_DYNAMIN_dom"/>
</dbReference>
<dbReference type="InterPro" id="IPR027417">
    <property type="entry name" value="P-loop_NTPase"/>
</dbReference>
<dbReference type="PANTHER" id="PTHR11216">
    <property type="entry name" value="EH DOMAIN"/>
    <property type="match status" value="1"/>
</dbReference>
<dbReference type="Pfam" id="PF18150">
    <property type="entry name" value="DUF5600"/>
    <property type="match status" value="1"/>
</dbReference>
<dbReference type="Pfam" id="PF00350">
    <property type="entry name" value="Dynamin_N"/>
    <property type="match status" value="1"/>
</dbReference>
<dbReference type="Pfam" id="PF12763">
    <property type="entry name" value="EH"/>
    <property type="match status" value="1"/>
</dbReference>
<dbReference type="Pfam" id="PF16880">
    <property type="entry name" value="EHD_N"/>
    <property type="match status" value="1"/>
</dbReference>
<dbReference type="SMART" id="SM00027">
    <property type="entry name" value="EH"/>
    <property type="match status" value="1"/>
</dbReference>
<dbReference type="SUPFAM" id="SSF47473">
    <property type="entry name" value="EF-hand"/>
    <property type="match status" value="1"/>
</dbReference>
<dbReference type="SUPFAM" id="SSF52540">
    <property type="entry name" value="P-loop containing nucleoside triphosphate hydrolases"/>
    <property type="match status" value="1"/>
</dbReference>
<dbReference type="PROSITE" id="PS00018">
    <property type="entry name" value="EF_HAND_1"/>
    <property type="match status" value="1"/>
</dbReference>
<dbReference type="PROSITE" id="PS50222">
    <property type="entry name" value="EF_HAND_2"/>
    <property type="match status" value="1"/>
</dbReference>
<dbReference type="PROSITE" id="PS50031">
    <property type="entry name" value="EH"/>
    <property type="match status" value="1"/>
</dbReference>
<dbReference type="PROSITE" id="PS51718">
    <property type="entry name" value="G_DYNAMIN_2"/>
    <property type="match status" value="1"/>
</dbReference>
<proteinExistence type="evidence at protein level"/>
<keyword id="KW-0067">ATP-binding</keyword>
<keyword id="KW-0106">Calcium</keyword>
<keyword id="KW-1003">Cell membrane</keyword>
<keyword id="KW-0963">Cytoplasm</keyword>
<keyword id="KW-0967">Endosome</keyword>
<keyword id="KW-0378">Hydrolase</keyword>
<keyword id="KW-0472">Membrane</keyword>
<keyword id="KW-0479">Metal-binding</keyword>
<keyword id="KW-0547">Nucleotide-binding</keyword>
<keyword id="KW-0597">Phosphoprotein</keyword>
<keyword id="KW-1185">Reference proteome</keyword>
<protein>
    <recommendedName>
        <fullName evidence="8">EH domain-containing protein 2</fullName>
    </recommendedName>
</protein>
<gene>
    <name evidence="9" type="primary">Ehd2</name>
</gene>
<sequence>MFSWLKKGGARGQRSEAIRTVTSSLKELYRTKLLPLEEHYRFGSFHSPALEDADFDGKPMVLVAGQYSTGKTSFIQYLLEQEVPGSRVGPEPTTDCFVAVMHGETEGTVPGNALVVDPEKPFRKLNPFGNTFLNRFMCAQLPNQVLESISIIDTPGILSGAKQRVSRGYDFPAVLRWFAERVDLIILLFDAHKLEISDEFSEAIGALRGHEDKIRVVLNKADMVETQQLMRVYGALMWALGKVVGTPEVLRVYIGSFWSQPLLVPDNRRLFELEEQDLFRDIQGLPRHAALRKLNDLVKRARLVRVHAYIISYLKKEMPSVFGKENKKKQLIFKLPVIFAKIQLEHHISPGDFPDCQKMQELLMAHDFTKFHSLKPKLLEALDEMLTHDIAKLMPLLRQEELESVEAGVQGGAFEGTRMGPFVERGPDEAIEDGEEGSEDDAEWVVTKDKSKYDEIFYNLAPADGKLSGSKAKTWMVGTKLPNSVLGRIWKLSDVDRDGMLDDEEFALASHLIEAKLEGHGLPTNLPRRLVPPSKRRQKGSAE</sequence>
<name>EHD2_RAT</name>
<accession>Q4V8H8</accession>
<organism>
    <name type="scientific">Rattus norvegicus</name>
    <name type="common">Rat</name>
    <dbReference type="NCBI Taxonomy" id="10116"/>
    <lineage>
        <taxon>Eukaryota</taxon>
        <taxon>Metazoa</taxon>
        <taxon>Chordata</taxon>
        <taxon>Craniata</taxon>
        <taxon>Vertebrata</taxon>
        <taxon>Euteleostomi</taxon>
        <taxon>Mammalia</taxon>
        <taxon>Eutheria</taxon>
        <taxon>Euarchontoglires</taxon>
        <taxon>Glires</taxon>
        <taxon>Rodentia</taxon>
        <taxon>Myomorpha</taxon>
        <taxon>Muroidea</taxon>
        <taxon>Muridae</taxon>
        <taxon>Murinae</taxon>
        <taxon>Rattus</taxon>
    </lineage>
</organism>
<comment type="function">
    <text evidence="1 2">ATP- and membrane-binding protein that controls membrane reorganization/tubulation upon ATP hydrolysis. Plays a role in membrane trafficking between the plasma membrane and endosomes. Important for the internalization of GLUT4. Required for fusion of myoblasts to skeletal muscle myotubes. Required for normal translocation of FER1L5 to the plasma membrane. Regulates the equilibrium between cell surface-associated and cell surface-dissociated caveolae by constraining caveolae at the cell membrane.</text>
</comment>
<comment type="activity regulation">
    <text evidence="1">The very low intrinsic ATPase activity is increased upon interaction with liposomes.</text>
</comment>
<comment type="subunit">
    <text evidence="1 2">Homodimer and homooligomer. Interacts with EHD1. May also interact with EHD3 and EHD4. Interacts with MYOF. Interacts with EHBP1. Interacts with FER1L5 (via second C2 domain). Interacts with CAV1 in a cholesterol-dependent manner. Interacts (via EH domain) with PACSIN2 (via NPF motifs); this interaction probably stabilizes the caveolae (By similarity).</text>
</comment>
<comment type="subcellular location">
    <subcellularLocation>
        <location evidence="7">Cell membrane</location>
        <topology evidence="7">Peripheral membrane protein</topology>
        <orientation evidence="7">Cytoplasmic side</orientation>
    </subcellularLocation>
    <subcellularLocation>
        <location evidence="1">Membrane</location>
        <location evidence="1">Caveola</location>
        <topology evidence="1">Peripheral membrane protein</topology>
        <orientation evidence="1">Cytoplasmic side</orientation>
    </subcellularLocation>
    <subcellularLocation>
        <location evidence="7">Endosome membrane</location>
        <topology evidence="7">Peripheral membrane protein</topology>
        <orientation evidence="7">Cytoplasmic side</orientation>
    </subcellularLocation>
    <subcellularLocation>
        <location evidence="7">Cytoplasm</location>
        <location evidence="7">Cytosol</location>
    </subcellularLocation>
    <text evidence="1 7">Colocalizes with GLUT4 in intracellular tubulovesicular structures that are associated with cortical F-actin (PubMed:14676205). Colocalizes with FER1L5 at plasma membrane in myoblasts and myotubes (By similarity).</text>
</comment>
<comment type="domain">
    <text evidence="1">The EH domain interacts with Asn-Pro-Phe (NPF) motifs of target proteins.</text>
</comment>
<comment type="similarity">
    <text evidence="5">Belongs to the TRAFAC class dynamin-like GTPase superfamily. Dynamin/Fzo/YdjA family. EHD subfamily.</text>
</comment>
<feature type="chain" id="PRO_0000322644" description="EH domain-containing protein 2">
    <location>
        <begin position="1"/>
        <end position="543"/>
    </location>
</feature>
<feature type="domain" description="Dynamin-type G" evidence="5">
    <location>
        <begin position="55"/>
        <end position="286"/>
    </location>
</feature>
<feature type="domain" description="EH" evidence="3">
    <location>
        <begin position="449"/>
        <end position="537"/>
    </location>
</feature>
<feature type="domain" description="EF-hand" evidence="4">
    <location>
        <begin position="481"/>
        <end position="516"/>
    </location>
</feature>
<feature type="region of interest" description="G1 motif" evidence="5">
    <location>
        <begin position="65"/>
        <end position="72"/>
    </location>
</feature>
<feature type="region of interest" description="G2 motif" evidence="5">
    <location>
        <begin position="91"/>
        <end position="92"/>
    </location>
</feature>
<feature type="region of interest" description="G3 motif" evidence="5">
    <location>
        <begin position="153"/>
        <end position="156"/>
    </location>
</feature>
<feature type="region of interest" description="G4 motif" evidence="5">
    <location>
        <begin position="219"/>
        <end position="222"/>
    </location>
</feature>
<feature type="region of interest" description="G5 motif" evidence="5">
    <location>
        <position position="243"/>
    </location>
</feature>
<feature type="region of interest" description="Mediates membrane-binding" evidence="1">
    <location>
        <begin position="320"/>
        <end position="340"/>
    </location>
</feature>
<feature type="region of interest" description="Disordered" evidence="6">
    <location>
        <begin position="521"/>
        <end position="543"/>
    </location>
</feature>
<feature type="compositionally biased region" description="Basic residues" evidence="6">
    <location>
        <begin position="534"/>
        <end position="543"/>
    </location>
</feature>
<feature type="binding site" evidence="1">
    <location>
        <begin position="65"/>
        <end position="72"/>
    </location>
    <ligand>
        <name>ATP</name>
        <dbReference type="ChEBI" id="CHEBI:30616"/>
    </ligand>
</feature>
<feature type="binding site" evidence="1">
    <location>
        <position position="220"/>
    </location>
    <ligand>
        <name>ATP</name>
        <dbReference type="ChEBI" id="CHEBI:30616"/>
    </ligand>
</feature>
<feature type="binding site" evidence="1">
    <location>
        <position position="258"/>
    </location>
    <ligand>
        <name>ATP</name>
        <dbReference type="ChEBI" id="CHEBI:30616"/>
    </ligand>
</feature>
<feature type="binding site" evidence="4">
    <location>
        <position position="494"/>
    </location>
    <ligand>
        <name>Ca(2+)</name>
        <dbReference type="ChEBI" id="CHEBI:29108"/>
    </ligand>
</feature>
<feature type="binding site" evidence="4">
    <location>
        <position position="496"/>
    </location>
    <ligand>
        <name>Ca(2+)</name>
        <dbReference type="ChEBI" id="CHEBI:29108"/>
    </ligand>
</feature>
<feature type="binding site" evidence="4">
    <location>
        <position position="498"/>
    </location>
    <ligand>
        <name>Ca(2+)</name>
        <dbReference type="ChEBI" id="CHEBI:29108"/>
    </ligand>
</feature>
<feature type="binding site" evidence="4">
    <location>
        <position position="500"/>
    </location>
    <ligand>
        <name>Ca(2+)</name>
        <dbReference type="ChEBI" id="CHEBI:29108"/>
    </ligand>
</feature>
<feature type="binding site" evidence="4">
    <location>
        <position position="505"/>
    </location>
    <ligand>
        <name>Ca(2+)</name>
        <dbReference type="ChEBI" id="CHEBI:29108"/>
    </ligand>
</feature>
<feature type="modified residue" description="Phosphoserine" evidence="10">
    <location>
        <position position="3"/>
    </location>
</feature>
<feature type="modified residue" description="Phosphoserine" evidence="1">
    <location>
        <position position="44"/>
    </location>
</feature>
<feature type="modified residue" description="Phosphoserine" evidence="10">
    <location>
        <position position="438"/>
    </location>
</feature>
<feature type="modified residue" description="Phosphoserine" evidence="2">
    <location>
        <position position="468"/>
    </location>
</feature>
<feature type="modified residue" description="Phosphoserine" evidence="10">
    <location>
        <position position="470"/>
    </location>
</feature>
<feature type="modified residue" description="Phosphoserine" evidence="2">
    <location>
        <position position="484"/>
    </location>
</feature>
<feature type="modified residue" description="Phosphoserine" evidence="10">
    <location>
        <position position="493"/>
    </location>
</feature>
<evidence type="ECO:0000250" key="1">
    <source>
        <dbReference type="UniProtKB" id="Q8BH64"/>
    </source>
</evidence>
<evidence type="ECO:0000250" key="2">
    <source>
        <dbReference type="UniProtKB" id="Q9NZN4"/>
    </source>
</evidence>
<evidence type="ECO:0000255" key="3">
    <source>
        <dbReference type="PROSITE-ProRule" id="PRU00077"/>
    </source>
</evidence>
<evidence type="ECO:0000255" key="4">
    <source>
        <dbReference type="PROSITE-ProRule" id="PRU00448"/>
    </source>
</evidence>
<evidence type="ECO:0000255" key="5">
    <source>
        <dbReference type="PROSITE-ProRule" id="PRU01055"/>
    </source>
</evidence>
<evidence type="ECO:0000256" key="6">
    <source>
        <dbReference type="SAM" id="MobiDB-lite"/>
    </source>
</evidence>
<evidence type="ECO:0000269" key="7">
    <source>
    </source>
</evidence>
<evidence type="ECO:0000305" key="8"/>
<evidence type="ECO:0000312" key="9">
    <source>
        <dbReference type="RGD" id="1560856"/>
    </source>
</evidence>
<evidence type="ECO:0007744" key="10">
    <source>
    </source>
</evidence>